<protein>
    <recommendedName>
        <fullName>Putative F-box/kelch-repeat protein At5g38680</fullName>
    </recommendedName>
</protein>
<feature type="chain" id="PRO_0000283271" description="Putative F-box/kelch-repeat protein At5g38680">
    <location>
        <begin position="1"/>
        <end position="357"/>
    </location>
</feature>
<feature type="domain" description="F-box">
    <location>
        <begin position="14"/>
        <end position="61"/>
    </location>
</feature>
<feature type="repeat" description="Kelch 1">
    <location>
        <begin position="131"/>
        <end position="175"/>
    </location>
</feature>
<feature type="repeat" description="Kelch 2">
    <location>
        <begin position="177"/>
        <end position="224"/>
    </location>
</feature>
<feature type="repeat" description="Kelch 3">
    <location>
        <begin position="226"/>
        <end position="267"/>
    </location>
</feature>
<feature type="repeat" description="Kelch 4">
    <location>
        <begin position="268"/>
        <end position="313"/>
    </location>
</feature>
<keyword id="KW-0880">Kelch repeat</keyword>
<keyword id="KW-1185">Reference proteome</keyword>
<keyword id="KW-0677">Repeat</keyword>
<proteinExistence type="predicted"/>
<accession>Q9FFV4</accession>
<gene>
    <name type="ordered locus">At5g38680</name>
    <name type="ORF">MBB18.23</name>
</gene>
<organism>
    <name type="scientific">Arabidopsis thaliana</name>
    <name type="common">Mouse-ear cress</name>
    <dbReference type="NCBI Taxonomy" id="3702"/>
    <lineage>
        <taxon>Eukaryota</taxon>
        <taxon>Viridiplantae</taxon>
        <taxon>Streptophyta</taxon>
        <taxon>Embryophyta</taxon>
        <taxon>Tracheophyta</taxon>
        <taxon>Spermatophyta</taxon>
        <taxon>Magnoliopsida</taxon>
        <taxon>eudicotyledons</taxon>
        <taxon>Gunneridae</taxon>
        <taxon>Pentapetalae</taxon>
        <taxon>rosids</taxon>
        <taxon>malvids</taxon>
        <taxon>Brassicales</taxon>
        <taxon>Brassicaceae</taxon>
        <taxon>Camelineae</taxon>
        <taxon>Arabidopsis</taxon>
    </lineage>
</organism>
<sequence length="357" mass="40502">MSSPEKFSPAPESNSNPSLPDALIISCIARVSRLYYPILSFVSKSFRSLLASPELYKERSLLNRTEGCLYVCLYLNPFESPSWFTLCLKPDQALSSETSNKKKSSGYVLATVSIPHPRLVQRSSLVAVGSNIYNIGRSISPYSSVSIFDCRSHTWREAPSLPVELVEVSAGVLDGKIYVAGSCKDGDSLNLKNTFEVFDTKTQVWDHVPIPYNETKHNIYSKSLCIDEKWYVGAKRKVVSYNPKKGIWDLVESEMCSYKSSYDYCEIENVLYSVEKTWRGTVFRWYDTELGRWRKLEGLNMPYSGTGDRGGKKMIWCAVITLERRKNSGIWGNVEWFAHVLTVPKTFVFQKFLAATV</sequence>
<dbReference type="EMBL" id="AB005231">
    <property type="protein sequence ID" value="BAB10158.1"/>
    <property type="molecule type" value="Genomic_DNA"/>
</dbReference>
<dbReference type="EMBL" id="CP002688">
    <property type="protein sequence ID" value="AED94349.1"/>
    <property type="molecule type" value="Genomic_DNA"/>
</dbReference>
<dbReference type="RefSeq" id="NP_198684.1">
    <property type="nucleotide sequence ID" value="NM_123229.1"/>
</dbReference>
<dbReference type="SMR" id="Q9FFV4"/>
<dbReference type="FunCoup" id="Q9FFV4">
    <property type="interactions" value="1"/>
</dbReference>
<dbReference type="PaxDb" id="3702-AT5G38680.1"/>
<dbReference type="EnsemblPlants" id="AT5G38680.1">
    <property type="protein sequence ID" value="AT5G38680.1"/>
    <property type="gene ID" value="AT5G38680"/>
</dbReference>
<dbReference type="GeneID" id="833858"/>
<dbReference type="Gramene" id="AT5G38680.1">
    <property type="protein sequence ID" value="AT5G38680.1"/>
    <property type="gene ID" value="AT5G38680"/>
</dbReference>
<dbReference type="KEGG" id="ath:AT5G38680"/>
<dbReference type="Araport" id="AT5G38680"/>
<dbReference type="TAIR" id="AT5G38680"/>
<dbReference type="eggNOG" id="KOG1072">
    <property type="taxonomic scope" value="Eukaryota"/>
</dbReference>
<dbReference type="HOGENOM" id="CLU_032521_1_2_1"/>
<dbReference type="InParanoid" id="Q9FFV4"/>
<dbReference type="OMA" id="CIDEKWY"/>
<dbReference type="PhylomeDB" id="Q9FFV4"/>
<dbReference type="PRO" id="PR:Q9FFV4"/>
<dbReference type="Proteomes" id="UP000006548">
    <property type="component" value="Chromosome 5"/>
</dbReference>
<dbReference type="ExpressionAtlas" id="Q9FFV4">
    <property type="expression patterns" value="baseline and differential"/>
</dbReference>
<dbReference type="CDD" id="cd22152">
    <property type="entry name" value="F-box_AtAFR-like"/>
    <property type="match status" value="1"/>
</dbReference>
<dbReference type="Gene3D" id="2.120.10.80">
    <property type="entry name" value="Kelch-type beta propeller"/>
    <property type="match status" value="1"/>
</dbReference>
<dbReference type="InterPro" id="IPR050354">
    <property type="entry name" value="F-box/kelch-repeat_ARATH"/>
</dbReference>
<dbReference type="InterPro" id="IPR001810">
    <property type="entry name" value="F-box_dom"/>
</dbReference>
<dbReference type="InterPro" id="IPR015915">
    <property type="entry name" value="Kelch-typ_b-propeller"/>
</dbReference>
<dbReference type="PANTHER" id="PTHR24414">
    <property type="entry name" value="F-BOX/KELCH-REPEAT PROTEIN SKIP4"/>
    <property type="match status" value="1"/>
</dbReference>
<dbReference type="PANTHER" id="PTHR24414:SF184">
    <property type="entry name" value="GALACTOSE OXIDASE_KELCH REPEAT SUPERFAMILY PROTEIN"/>
    <property type="match status" value="1"/>
</dbReference>
<dbReference type="Pfam" id="PF00646">
    <property type="entry name" value="F-box"/>
    <property type="match status" value="1"/>
</dbReference>
<dbReference type="Pfam" id="PF25210">
    <property type="entry name" value="Kelch_FKB95"/>
    <property type="match status" value="1"/>
</dbReference>
<dbReference type="SMART" id="SM00256">
    <property type="entry name" value="FBOX"/>
    <property type="match status" value="1"/>
</dbReference>
<dbReference type="SUPFAM" id="SSF117281">
    <property type="entry name" value="Kelch motif"/>
    <property type="match status" value="1"/>
</dbReference>
<name>FK116_ARATH</name>
<reference key="1">
    <citation type="journal article" date="1997" name="DNA Res.">
        <title>Structural analysis of Arabidopsis thaliana chromosome 5. I. Sequence features of the 1.6 Mb regions covered by twenty physically assigned P1 clones.</title>
        <authorList>
            <person name="Sato S."/>
            <person name="Kotani H."/>
            <person name="Nakamura Y."/>
            <person name="Kaneko T."/>
            <person name="Asamizu E."/>
            <person name="Fukami M."/>
            <person name="Miyajima N."/>
            <person name="Tabata S."/>
        </authorList>
    </citation>
    <scope>NUCLEOTIDE SEQUENCE [LARGE SCALE GENOMIC DNA]</scope>
    <source>
        <strain>cv. Columbia</strain>
    </source>
</reference>
<reference key="2">
    <citation type="journal article" date="2017" name="Plant J.">
        <title>Araport11: a complete reannotation of the Arabidopsis thaliana reference genome.</title>
        <authorList>
            <person name="Cheng C.Y."/>
            <person name="Krishnakumar V."/>
            <person name="Chan A.P."/>
            <person name="Thibaud-Nissen F."/>
            <person name="Schobel S."/>
            <person name="Town C.D."/>
        </authorList>
    </citation>
    <scope>GENOME REANNOTATION</scope>
    <source>
        <strain>cv. Columbia</strain>
    </source>
</reference>